<keyword id="KW-0963">Cytoplasm</keyword>
<keyword id="KW-0560">Oxidoreductase</keyword>
<evidence type="ECO:0000250" key="1">
    <source>
        <dbReference type="UniProtKB" id="Q46338"/>
    </source>
</evidence>
<evidence type="ECO:0000269" key="2">
    <source ref="1"/>
</evidence>
<evidence type="ECO:0000305" key="3"/>
<gene>
    <name type="primary">soxG</name>
</gene>
<protein>
    <recommendedName>
        <fullName evidence="3">Sarcosine oxidase subunit gamma</fullName>
        <shortName evidence="3">Sarcosine oxidase subunit G</shortName>
        <ecNumber evidence="1">1.5.3.24</ecNumber>
    </recommendedName>
    <alternativeName>
        <fullName evidence="1">Sarcosine oxidase (5,10-methylenetetrahydrofolate-forming) subunit gamma</fullName>
    </alternativeName>
    <alternativeName>
        <fullName evidence="3">Tetrameric sarcosine oxidase subunit gamma</fullName>
        <shortName evidence="3">TSOX subunit gamma</shortName>
    </alternativeName>
</protein>
<proteinExistence type="evidence at protein level"/>
<accession>Q9AGP0</accession>
<name>TSOXG_ARTSP</name>
<sequence length="203" mass="20876">MASNTLIESTSLRRSPAEHLAEAMAQGSTAGAVVLREIAFATQVGVRAVPGSAGHAALAAALGTGLPQQVGEVAGAAEGTAVLWLGPDEFLAIAPEGSGLAGELVAALGGEPGQVIDLSANRSVLELSGPAAPLVLRKSCPADLHPRAFGVNRAIATTLANIPVLLWRTGEQSWYVLPRVFFTEHTVHWLIDAMTEFASPTVA</sequence>
<organism>
    <name type="scientific">Arthrobacter sp</name>
    <dbReference type="NCBI Taxonomy" id="1667"/>
    <lineage>
        <taxon>Bacteria</taxon>
        <taxon>Bacillati</taxon>
        <taxon>Actinomycetota</taxon>
        <taxon>Actinomycetes</taxon>
        <taxon>Micrococcales</taxon>
        <taxon>Micrococcaceae</taxon>
        <taxon>Arthrobacter</taxon>
    </lineage>
</organism>
<dbReference type="EC" id="1.5.3.24" evidence="1"/>
<dbReference type="EMBL" id="AF329478">
    <property type="protein sequence ID" value="AAK16490.1"/>
    <property type="molecule type" value="Genomic_DNA"/>
</dbReference>
<dbReference type="SMR" id="Q9AGP0"/>
<dbReference type="GO" id="GO:0005737">
    <property type="term" value="C:cytoplasm"/>
    <property type="evidence" value="ECO:0007669"/>
    <property type="project" value="UniProtKB-SubCell"/>
</dbReference>
<dbReference type="GO" id="GO:0008115">
    <property type="term" value="F:sarcosine oxidase activity"/>
    <property type="evidence" value="ECO:0007669"/>
    <property type="project" value="UniProtKB-EC"/>
</dbReference>
<dbReference type="GO" id="GO:1901053">
    <property type="term" value="P:sarcosine catabolic process"/>
    <property type="evidence" value="ECO:0007669"/>
    <property type="project" value="InterPro"/>
</dbReference>
<dbReference type="Gene3D" id="3.30.70.1520">
    <property type="entry name" value="Heterotetrameric sarcosine oxidase"/>
    <property type="match status" value="1"/>
</dbReference>
<dbReference type="Gene3D" id="3.30.1360.120">
    <property type="entry name" value="Probable tRNA modification gtpase trme, domain 1"/>
    <property type="match status" value="1"/>
</dbReference>
<dbReference type="InterPro" id="IPR007375">
    <property type="entry name" value="SoxG"/>
</dbReference>
<dbReference type="InterPro" id="IPR006280">
    <property type="entry name" value="SoxG_het"/>
</dbReference>
<dbReference type="InterPro" id="IPR027266">
    <property type="entry name" value="TrmE/GcvT_dom1"/>
</dbReference>
<dbReference type="NCBIfam" id="TIGR01375">
    <property type="entry name" value="soxG"/>
    <property type="match status" value="1"/>
</dbReference>
<dbReference type="Pfam" id="PF04268">
    <property type="entry name" value="SoxG"/>
    <property type="match status" value="1"/>
</dbReference>
<dbReference type="SUPFAM" id="SSF103025">
    <property type="entry name" value="Folate-binding domain"/>
    <property type="match status" value="1"/>
</dbReference>
<comment type="function">
    <text evidence="1 2">In the presence of tetrahydrofolate, catalyzes the oxidative demethylation of sarcosine to yield glycine, 5,10-methylenetetrahydrofolate and hydrogen peroxide (By similarity). In the absence of tetrahydrofolate, catalyzes the oxidative demethylation of sarcosine to yield glycine, formaldehyde and hydrogen peroxide (Ref.1).</text>
</comment>
<comment type="catalytic activity">
    <reaction evidence="1">
        <text>sarcosine + (6S)-5,6,7,8-tetrahydrofolate + O2 = (6R)-5,10-methylene-5,6,7,8-tetrahydrofolate + glycine + H2O2</text>
        <dbReference type="Rhea" id="RHEA:70455"/>
        <dbReference type="ChEBI" id="CHEBI:15379"/>
        <dbReference type="ChEBI" id="CHEBI:15636"/>
        <dbReference type="ChEBI" id="CHEBI:16240"/>
        <dbReference type="ChEBI" id="CHEBI:57305"/>
        <dbReference type="ChEBI" id="CHEBI:57433"/>
        <dbReference type="ChEBI" id="CHEBI:57453"/>
        <dbReference type="EC" id="1.5.3.24"/>
    </reaction>
</comment>
<comment type="catalytic activity">
    <reaction evidence="2">
        <text>sarcosine + O2 + H2O = formaldehyde + glycine + H2O2</text>
        <dbReference type="Rhea" id="RHEA:13313"/>
        <dbReference type="ChEBI" id="CHEBI:15377"/>
        <dbReference type="ChEBI" id="CHEBI:15379"/>
        <dbReference type="ChEBI" id="CHEBI:16240"/>
        <dbReference type="ChEBI" id="CHEBI:16842"/>
        <dbReference type="ChEBI" id="CHEBI:57305"/>
        <dbReference type="ChEBI" id="CHEBI:57433"/>
    </reaction>
</comment>
<comment type="subunit">
    <text evidence="2">Heterotetramer composed of subunits alpha (SoxA), beta (SoxB), gamma (SoxG) and delta (SoxD).</text>
</comment>
<comment type="subcellular location">
    <subcellularLocation>
        <location evidence="1">Cytoplasm</location>
    </subcellularLocation>
</comment>
<comment type="similarity">
    <text evidence="3">Belongs to the SoxG family.</text>
</comment>
<feature type="chain" id="PRO_0000428959" description="Sarcosine oxidase subunit gamma">
    <location>
        <begin position="1"/>
        <end position="203"/>
    </location>
</feature>
<reference key="1">
    <citation type="journal article" date="1996" name="Biotechnol. Lett.">
        <title>Cloning of genes encoding heterotetrameric sarcosine oxidase from Arthrobacter sp.</title>
        <authorList>
            <person name="Meskys R."/>
            <person name="Rudomanskis R."/>
            <person name="Leipuviene R."/>
        </authorList>
    </citation>
    <scope>NUCLEOTIDE SEQUENCE [GENOMIC DNA]</scope>
    <scope>FUNCTION</scope>
    <scope>CATALYTIC ACTIVITY</scope>
    <scope>SUBUNIT</scope>
    <source>
        <strain>1IN</strain>
    </source>
</reference>